<evidence type="ECO:0000255" key="1"/>
<evidence type="ECO:0000255" key="2">
    <source>
        <dbReference type="PROSITE-ProRule" id="PRU01114"/>
    </source>
</evidence>
<evidence type="ECO:0000256" key="3">
    <source>
        <dbReference type="SAM" id="MobiDB-lite"/>
    </source>
</evidence>
<evidence type="ECO:0000269" key="4">
    <source>
    </source>
</evidence>
<evidence type="ECO:0000303" key="5">
    <source>
    </source>
</evidence>
<evidence type="ECO:0000305" key="6"/>
<evidence type="ECO:0007829" key="7">
    <source>
        <dbReference type="PDB" id="8AXW"/>
    </source>
</evidence>
<protein>
    <recommendedName>
        <fullName evidence="5">Protein Aster-C</fullName>
    </recommendedName>
    <alternativeName>
        <fullName>GRAM domain-containing protein 1C</fullName>
    </alternativeName>
</protein>
<gene>
    <name type="primary">Gramd1c</name>
</gene>
<sequence>MEGALTARQIVNEGDSSLATELQEEPEESPGPVVDENIVSAKKQGQSTHNWSGDWSFWISSSTYKDRNEEYRQQFTHLPDSEKLIADYACALQKDILVQGRLYLSEKWLCFYSNIFRWETTISIALKNITFMTKEKTARLIPNAIQIITEGEKFFFTSFGARDRSYLIIFRLWQNVLLDKSLTRQEFWQLLQQNYGTELGLNAEEMEHLLSVEENVQPRSPGRSSVDDAGERDEKFSKAVSFTQESVSRASETEPLDGNSPKRGLGKEDSQSERNVRKSPSLASEKRISRAPSKSLDLNKNEYLSLDKSSTSDSVDEENIPEKDLQGRLYINRVFHISAERMFELLFTSSHFMQRFANSRNIIDVVSTPWTVESGGNQLRTMTYTIVLSNPLTGKYTAATEKQTLYKESREAQFYLVDSEVLTHDVPYHDYFYTLNRYCIVRSAKQRCRLRVSTDLKYRKQPWGLIKSLIEKNSWSSLESYFKKLESDLLMEESVLSQSIEDAGKHSSLRRRRRTLNRTAEPVPKLSSQRSSTDLGFEAKVDVTGKRKTVDSYDTALIVVMSIFLLLLVLLNVTLFLKLSKIEHATQSFYQLHLQGEKSLNLVSDRFSRTENIQKNKDQAHRLKGVLQDSIVMLEQLKSSLIMLQKTFDLLNKNKSGVAVES</sequence>
<feature type="chain" id="PRO_0000287452" description="Protein Aster-C">
    <location>
        <begin position="1"/>
        <end position="662"/>
    </location>
</feature>
<feature type="transmembrane region" description="Helical" evidence="1">
    <location>
        <begin position="557"/>
        <end position="577"/>
    </location>
</feature>
<feature type="domain" description="GRAM" evidence="1">
    <location>
        <begin position="70"/>
        <end position="176"/>
    </location>
</feature>
<feature type="domain" description="VASt" evidence="2">
    <location>
        <begin position="326"/>
        <end position="497"/>
    </location>
</feature>
<feature type="region of interest" description="Disordered" evidence="3">
    <location>
        <begin position="1"/>
        <end position="33"/>
    </location>
</feature>
<feature type="region of interest" description="Disordered" evidence="3">
    <location>
        <begin position="212"/>
        <end position="294"/>
    </location>
</feature>
<feature type="region of interest" description="Disordered" evidence="3">
    <location>
        <begin position="506"/>
        <end position="530"/>
    </location>
</feature>
<feature type="compositionally biased region" description="Polar residues" evidence="3">
    <location>
        <begin position="240"/>
        <end position="250"/>
    </location>
</feature>
<feature type="compositionally biased region" description="Basic and acidic residues" evidence="3">
    <location>
        <begin position="265"/>
        <end position="276"/>
    </location>
</feature>
<feature type="compositionally biased region" description="Basic residues" evidence="3">
    <location>
        <begin position="507"/>
        <end position="516"/>
    </location>
</feature>
<feature type="strand" evidence="7">
    <location>
        <begin position="326"/>
        <end position="337"/>
    </location>
</feature>
<feature type="helix" evidence="7">
    <location>
        <begin position="339"/>
        <end position="347"/>
    </location>
</feature>
<feature type="helix" evidence="7">
    <location>
        <begin position="351"/>
        <end position="359"/>
    </location>
</feature>
<feature type="strand" evidence="7">
    <location>
        <begin position="362"/>
        <end position="367"/>
    </location>
</feature>
<feature type="strand" evidence="7">
    <location>
        <begin position="378"/>
        <end position="387"/>
    </location>
</feature>
<feature type="helix" evidence="7">
    <location>
        <begin position="391"/>
        <end position="393"/>
    </location>
</feature>
<feature type="strand" evidence="7">
    <location>
        <begin position="395"/>
        <end position="405"/>
    </location>
</feature>
<feature type="helix" evidence="7">
    <location>
        <begin position="407"/>
        <end position="411"/>
    </location>
</feature>
<feature type="strand" evidence="7">
    <location>
        <begin position="414"/>
        <end position="426"/>
    </location>
</feature>
<feature type="helix" evidence="7">
    <location>
        <begin position="429"/>
        <end position="431"/>
    </location>
</feature>
<feature type="strand" evidence="7">
    <location>
        <begin position="432"/>
        <end position="443"/>
    </location>
</feature>
<feature type="turn" evidence="7">
    <location>
        <begin position="444"/>
        <end position="446"/>
    </location>
</feature>
<feature type="strand" evidence="7">
    <location>
        <begin position="447"/>
        <end position="460"/>
    </location>
</feature>
<feature type="helix" evidence="7">
    <location>
        <begin position="465"/>
        <end position="490"/>
    </location>
</feature>
<organism>
    <name type="scientific">Mus musculus</name>
    <name type="common">Mouse</name>
    <dbReference type="NCBI Taxonomy" id="10090"/>
    <lineage>
        <taxon>Eukaryota</taxon>
        <taxon>Metazoa</taxon>
        <taxon>Chordata</taxon>
        <taxon>Craniata</taxon>
        <taxon>Vertebrata</taxon>
        <taxon>Euteleostomi</taxon>
        <taxon>Mammalia</taxon>
        <taxon>Eutheria</taxon>
        <taxon>Euarchontoglires</taxon>
        <taxon>Glires</taxon>
        <taxon>Rodentia</taxon>
        <taxon>Myomorpha</taxon>
        <taxon>Muroidea</taxon>
        <taxon>Muridae</taxon>
        <taxon>Murinae</taxon>
        <taxon>Mus</taxon>
        <taxon>Mus</taxon>
    </lineage>
</organism>
<reference key="1">
    <citation type="journal article" date="2009" name="PLoS Biol.">
        <title>Lineage-specific biology revealed by a finished genome assembly of the mouse.</title>
        <authorList>
            <person name="Church D.M."/>
            <person name="Goodstadt L."/>
            <person name="Hillier L.W."/>
            <person name="Zody M.C."/>
            <person name="Goldstein S."/>
            <person name="She X."/>
            <person name="Bult C.J."/>
            <person name="Agarwala R."/>
            <person name="Cherry J.L."/>
            <person name="DiCuccio M."/>
            <person name="Hlavina W."/>
            <person name="Kapustin Y."/>
            <person name="Meric P."/>
            <person name="Maglott D."/>
            <person name="Birtle Z."/>
            <person name="Marques A.C."/>
            <person name="Graves T."/>
            <person name="Zhou S."/>
            <person name="Teague B."/>
            <person name="Potamousis K."/>
            <person name="Churas C."/>
            <person name="Place M."/>
            <person name="Herschleb J."/>
            <person name="Runnheim R."/>
            <person name="Forrest D."/>
            <person name="Amos-Landgraf J."/>
            <person name="Schwartz D.C."/>
            <person name="Cheng Z."/>
            <person name="Lindblad-Toh K."/>
            <person name="Eichler E.E."/>
            <person name="Ponting C.P."/>
        </authorList>
    </citation>
    <scope>NUCLEOTIDE SEQUENCE [LARGE SCALE GENOMIC DNA]</scope>
    <source>
        <strain>C57BL/6J</strain>
    </source>
</reference>
<reference key="2">
    <citation type="journal article" date="2005" name="Science">
        <title>The transcriptional landscape of the mammalian genome.</title>
        <authorList>
            <person name="Carninci P."/>
            <person name="Kasukawa T."/>
            <person name="Katayama S."/>
            <person name="Gough J."/>
            <person name="Frith M.C."/>
            <person name="Maeda N."/>
            <person name="Oyama R."/>
            <person name="Ravasi T."/>
            <person name="Lenhard B."/>
            <person name="Wells C."/>
            <person name="Kodzius R."/>
            <person name="Shimokawa K."/>
            <person name="Bajic V.B."/>
            <person name="Brenner S.E."/>
            <person name="Batalov S."/>
            <person name="Forrest A.R."/>
            <person name="Zavolan M."/>
            <person name="Davis M.J."/>
            <person name="Wilming L.G."/>
            <person name="Aidinis V."/>
            <person name="Allen J.E."/>
            <person name="Ambesi-Impiombato A."/>
            <person name="Apweiler R."/>
            <person name="Aturaliya R.N."/>
            <person name="Bailey T.L."/>
            <person name="Bansal M."/>
            <person name="Baxter L."/>
            <person name="Beisel K.W."/>
            <person name="Bersano T."/>
            <person name="Bono H."/>
            <person name="Chalk A.M."/>
            <person name="Chiu K.P."/>
            <person name="Choudhary V."/>
            <person name="Christoffels A."/>
            <person name="Clutterbuck D.R."/>
            <person name="Crowe M.L."/>
            <person name="Dalla E."/>
            <person name="Dalrymple B.P."/>
            <person name="de Bono B."/>
            <person name="Della Gatta G."/>
            <person name="di Bernardo D."/>
            <person name="Down T."/>
            <person name="Engstrom P."/>
            <person name="Fagiolini M."/>
            <person name="Faulkner G."/>
            <person name="Fletcher C.F."/>
            <person name="Fukushima T."/>
            <person name="Furuno M."/>
            <person name="Futaki S."/>
            <person name="Gariboldi M."/>
            <person name="Georgii-Hemming P."/>
            <person name="Gingeras T.R."/>
            <person name="Gojobori T."/>
            <person name="Green R.E."/>
            <person name="Gustincich S."/>
            <person name="Harbers M."/>
            <person name="Hayashi Y."/>
            <person name="Hensch T.K."/>
            <person name="Hirokawa N."/>
            <person name="Hill D."/>
            <person name="Huminiecki L."/>
            <person name="Iacono M."/>
            <person name="Ikeo K."/>
            <person name="Iwama A."/>
            <person name="Ishikawa T."/>
            <person name="Jakt M."/>
            <person name="Kanapin A."/>
            <person name="Katoh M."/>
            <person name="Kawasawa Y."/>
            <person name="Kelso J."/>
            <person name="Kitamura H."/>
            <person name="Kitano H."/>
            <person name="Kollias G."/>
            <person name="Krishnan S.P."/>
            <person name="Kruger A."/>
            <person name="Kummerfeld S.K."/>
            <person name="Kurochkin I.V."/>
            <person name="Lareau L.F."/>
            <person name="Lazarevic D."/>
            <person name="Lipovich L."/>
            <person name="Liu J."/>
            <person name="Liuni S."/>
            <person name="McWilliam S."/>
            <person name="Madan Babu M."/>
            <person name="Madera M."/>
            <person name="Marchionni L."/>
            <person name="Matsuda H."/>
            <person name="Matsuzawa S."/>
            <person name="Miki H."/>
            <person name="Mignone F."/>
            <person name="Miyake S."/>
            <person name="Morris K."/>
            <person name="Mottagui-Tabar S."/>
            <person name="Mulder N."/>
            <person name="Nakano N."/>
            <person name="Nakauchi H."/>
            <person name="Ng P."/>
            <person name="Nilsson R."/>
            <person name="Nishiguchi S."/>
            <person name="Nishikawa S."/>
            <person name="Nori F."/>
            <person name="Ohara O."/>
            <person name="Okazaki Y."/>
            <person name="Orlando V."/>
            <person name="Pang K.C."/>
            <person name="Pavan W.J."/>
            <person name="Pavesi G."/>
            <person name="Pesole G."/>
            <person name="Petrovsky N."/>
            <person name="Piazza S."/>
            <person name="Reed J."/>
            <person name="Reid J.F."/>
            <person name="Ring B.Z."/>
            <person name="Ringwald M."/>
            <person name="Rost B."/>
            <person name="Ruan Y."/>
            <person name="Salzberg S.L."/>
            <person name="Sandelin A."/>
            <person name="Schneider C."/>
            <person name="Schoenbach C."/>
            <person name="Sekiguchi K."/>
            <person name="Semple C.A."/>
            <person name="Seno S."/>
            <person name="Sessa L."/>
            <person name="Sheng Y."/>
            <person name="Shibata Y."/>
            <person name="Shimada H."/>
            <person name="Shimada K."/>
            <person name="Silva D."/>
            <person name="Sinclair B."/>
            <person name="Sperling S."/>
            <person name="Stupka E."/>
            <person name="Sugiura K."/>
            <person name="Sultana R."/>
            <person name="Takenaka Y."/>
            <person name="Taki K."/>
            <person name="Tammoja K."/>
            <person name="Tan S.L."/>
            <person name="Tang S."/>
            <person name="Taylor M.S."/>
            <person name="Tegner J."/>
            <person name="Teichmann S.A."/>
            <person name="Ueda H.R."/>
            <person name="van Nimwegen E."/>
            <person name="Verardo R."/>
            <person name="Wei C.L."/>
            <person name="Yagi K."/>
            <person name="Yamanishi H."/>
            <person name="Zabarovsky E."/>
            <person name="Zhu S."/>
            <person name="Zimmer A."/>
            <person name="Hide W."/>
            <person name="Bult C."/>
            <person name="Grimmond S.M."/>
            <person name="Teasdale R.D."/>
            <person name="Liu E.T."/>
            <person name="Brusic V."/>
            <person name="Quackenbush J."/>
            <person name="Wahlestedt C."/>
            <person name="Mattick J.S."/>
            <person name="Hume D.A."/>
            <person name="Kai C."/>
            <person name="Sasaki D."/>
            <person name="Tomaru Y."/>
            <person name="Fukuda S."/>
            <person name="Kanamori-Katayama M."/>
            <person name="Suzuki M."/>
            <person name="Aoki J."/>
            <person name="Arakawa T."/>
            <person name="Iida J."/>
            <person name="Imamura K."/>
            <person name="Itoh M."/>
            <person name="Kato T."/>
            <person name="Kawaji H."/>
            <person name="Kawagashira N."/>
            <person name="Kawashima T."/>
            <person name="Kojima M."/>
            <person name="Kondo S."/>
            <person name="Konno H."/>
            <person name="Nakano K."/>
            <person name="Ninomiya N."/>
            <person name="Nishio T."/>
            <person name="Okada M."/>
            <person name="Plessy C."/>
            <person name="Shibata K."/>
            <person name="Shiraki T."/>
            <person name="Suzuki S."/>
            <person name="Tagami M."/>
            <person name="Waki K."/>
            <person name="Watahiki A."/>
            <person name="Okamura-Oho Y."/>
            <person name="Suzuki H."/>
            <person name="Kawai J."/>
            <person name="Hayashizaki Y."/>
        </authorList>
    </citation>
    <scope>NUCLEOTIDE SEQUENCE [LARGE SCALE MRNA] OF 181-325</scope>
    <source>
        <strain>C57BL/6J</strain>
        <tissue>Testis</tissue>
    </source>
</reference>
<reference key="3">
    <citation type="journal article" date="2004" name="Genome Res.">
        <title>The status, quality, and expansion of the NIH full-length cDNA project: the Mammalian Gene Collection (MGC).</title>
        <authorList>
            <consortium name="The MGC Project Team"/>
        </authorList>
    </citation>
    <scope>NUCLEOTIDE SEQUENCE [LARGE SCALE MRNA] OF 181-662</scope>
    <source>
        <strain>FVB/N</strain>
        <tissue>Kidney</tissue>
    </source>
</reference>
<reference key="4">
    <citation type="journal article" date="2018" name="Cell">
        <title>Aster proteins facilitate nonvesicular plasma membrane to ER cholesterol transport in mammalian cells.</title>
        <authorList>
            <person name="Sandhu J."/>
            <person name="Li S."/>
            <person name="Fairall L."/>
            <person name="Pfisterer S.G."/>
            <person name="Gurnett J.E."/>
            <person name="Xiao X."/>
            <person name="Weston T.A."/>
            <person name="Vashi D."/>
            <person name="Ferrari A."/>
            <person name="Orozco J.L."/>
            <person name="Hartman C.L."/>
            <person name="Strugatsky D."/>
            <person name="Lee S.D."/>
            <person name="He C."/>
            <person name="Hong C."/>
            <person name="Jiang H."/>
            <person name="Bentolila L.A."/>
            <person name="Gatta A.T."/>
            <person name="Levine T.P."/>
            <person name="Ferng A."/>
            <person name="Lee R."/>
            <person name="Ford D.A."/>
            <person name="Young S.G."/>
            <person name="Ikonen E."/>
            <person name="Schwabe J.W.R."/>
            <person name="Tontonoz P."/>
        </authorList>
    </citation>
    <scope>FUNCTION</scope>
    <scope>SUBCELLULAR LOCATION</scope>
    <scope>TISSUE SPECIFICITY</scope>
    <scope>DOMAINS GRAM AND VAST/ASTER</scope>
    <scope>GENE STRUCTURE</scope>
</reference>
<proteinExistence type="evidence at protein level"/>
<name>ASTRC_MOUSE</name>
<accession>Q8CI52</accession>
<accession>A0A1L1SSU1</accession>
<accession>Q8BI24</accession>
<keyword id="KW-0002">3D-structure</keyword>
<keyword id="KW-1003">Cell membrane</keyword>
<keyword id="KW-0256">Endoplasmic reticulum</keyword>
<keyword id="KW-0445">Lipid transport</keyword>
<keyword id="KW-0446">Lipid-binding</keyword>
<keyword id="KW-0472">Membrane</keyword>
<keyword id="KW-1185">Reference proteome</keyword>
<keyword id="KW-0812">Transmembrane</keyword>
<keyword id="KW-1133">Transmembrane helix</keyword>
<keyword id="KW-0813">Transport</keyword>
<dbReference type="EMBL" id="AC125098">
    <property type="status" value="NOT_ANNOTATED_CDS"/>
    <property type="molecule type" value="Genomic_DNA"/>
</dbReference>
<dbReference type="EMBL" id="AC132310">
    <property type="status" value="NOT_ANNOTATED_CDS"/>
    <property type="molecule type" value="Genomic_DNA"/>
</dbReference>
<dbReference type="EMBL" id="AC129306">
    <property type="status" value="NOT_ANNOTATED_CDS"/>
    <property type="molecule type" value="Genomic_DNA"/>
</dbReference>
<dbReference type="EMBL" id="AK029543">
    <property type="protein sequence ID" value="BAC26506.1"/>
    <property type="status" value="ALT_INIT"/>
    <property type="molecule type" value="mRNA"/>
</dbReference>
<dbReference type="EMBL" id="BC037472">
    <property type="protein sequence ID" value="AAH37472.1"/>
    <property type="status" value="ALT_INIT"/>
    <property type="molecule type" value="mRNA"/>
</dbReference>
<dbReference type="RefSeq" id="NP_001165578.1">
    <property type="nucleotide sequence ID" value="NM_001172107.1"/>
</dbReference>
<dbReference type="RefSeq" id="NP_001395263.1">
    <property type="nucleotide sequence ID" value="NM_001408334.1"/>
</dbReference>
<dbReference type="RefSeq" id="NP_705756.1">
    <property type="nucleotide sequence ID" value="NM_153528.2"/>
</dbReference>
<dbReference type="RefSeq" id="XP_006521957.1">
    <property type="nucleotide sequence ID" value="XM_006521894.2"/>
</dbReference>
<dbReference type="PDB" id="7AZN">
    <property type="method" value="X-ray"/>
    <property type="resolution" value="2.09 A"/>
    <property type="chains" value="A=327-503"/>
</dbReference>
<dbReference type="PDB" id="8AXW">
    <property type="method" value="X-ray"/>
    <property type="resolution" value="1.60 A"/>
    <property type="chains" value="A=296-517"/>
</dbReference>
<dbReference type="PDBsum" id="7AZN"/>
<dbReference type="PDBsum" id="8AXW"/>
<dbReference type="SMR" id="Q8CI52"/>
<dbReference type="FunCoup" id="Q8CI52">
    <property type="interactions" value="891"/>
</dbReference>
<dbReference type="STRING" id="10090.ENSMUSP00000036739"/>
<dbReference type="iPTMnet" id="Q8CI52"/>
<dbReference type="PhosphoSitePlus" id="Q8CI52"/>
<dbReference type="PaxDb" id="10090-ENSMUSP00000036739"/>
<dbReference type="ProteomicsDB" id="271097"/>
<dbReference type="ProteomicsDB" id="359743"/>
<dbReference type="Antibodypedia" id="2647">
    <property type="antibodies" value="9 antibodies from 7 providers"/>
</dbReference>
<dbReference type="DNASU" id="207798"/>
<dbReference type="Ensembl" id="ENSMUST00000214098.2">
    <property type="protein sequence ID" value="ENSMUSP00000150056.2"/>
    <property type="gene ID" value="ENSMUSG00000036292.15"/>
</dbReference>
<dbReference type="GeneID" id="207798"/>
<dbReference type="KEGG" id="mmu:207798"/>
<dbReference type="UCSC" id="uc007zgt.2">
    <property type="organism name" value="mouse"/>
</dbReference>
<dbReference type="AGR" id="MGI:2443024"/>
<dbReference type="CTD" id="54762"/>
<dbReference type="MGI" id="MGI:2443024">
    <property type="gene designation" value="Gramd1c"/>
</dbReference>
<dbReference type="VEuPathDB" id="HostDB:ENSMUSG00000036292"/>
<dbReference type="eggNOG" id="KOG1032">
    <property type="taxonomic scope" value="Eukaryota"/>
</dbReference>
<dbReference type="GeneTree" id="ENSGT00940000158013"/>
<dbReference type="HOGENOM" id="CLU_015189_2_0_1"/>
<dbReference type="InParanoid" id="Q8CI52"/>
<dbReference type="OMA" id="HISANKM"/>
<dbReference type="OrthoDB" id="2162691at2759"/>
<dbReference type="PhylomeDB" id="Q8CI52"/>
<dbReference type="TreeFam" id="TF327695"/>
<dbReference type="BioGRID-ORCS" id="207798">
    <property type="hits" value="2 hits in 77 CRISPR screens"/>
</dbReference>
<dbReference type="ChiTaRS" id="Gramd1c">
    <property type="organism name" value="mouse"/>
</dbReference>
<dbReference type="PRO" id="PR:Q8CI52"/>
<dbReference type="Proteomes" id="UP000000589">
    <property type="component" value="Chromosome 16"/>
</dbReference>
<dbReference type="RNAct" id="Q8CI52">
    <property type="molecule type" value="protein"/>
</dbReference>
<dbReference type="Bgee" id="ENSMUSG00000036292">
    <property type="expression patterns" value="Expressed in olfactory epithelium and 159 other cell types or tissues"/>
</dbReference>
<dbReference type="ExpressionAtlas" id="Q8CI52">
    <property type="expression patterns" value="baseline and differential"/>
</dbReference>
<dbReference type="GO" id="GO:0005789">
    <property type="term" value="C:endoplasmic reticulum membrane"/>
    <property type="evidence" value="ECO:0000314"/>
    <property type="project" value="UniProtKB"/>
</dbReference>
<dbReference type="GO" id="GO:0140268">
    <property type="term" value="C:endoplasmic reticulum-plasma membrane contact site"/>
    <property type="evidence" value="ECO:0000314"/>
    <property type="project" value="UniProtKB"/>
</dbReference>
<dbReference type="GO" id="GO:0005886">
    <property type="term" value="C:plasma membrane"/>
    <property type="evidence" value="ECO:0000314"/>
    <property type="project" value="UniProtKB"/>
</dbReference>
<dbReference type="GO" id="GO:0015485">
    <property type="term" value="F:cholesterol binding"/>
    <property type="evidence" value="ECO:0000314"/>
    <property type="project" value="UniProtKB"/>
</dbReference>
<dbReference type="GO" id="GO:0120020">
    <property type="term" value="F:cholesterol transfer activity"/>
    <property type="evidence" value="ECO:0000314"/>
    <property type="project" value="UniProtKB"/>
</dbReference>
<dbReference type="GO" id="GO:0071397">
    <property type="term" value="P:cellular response to cholesterol"/>
    <property type="evidence" value="ECO:0000314"/>
    <property type="project" value="UniProtKB"/>
</dbReference>
<dbReference type="CDD" id="cd13220">
    <property type="entry name" value="PH-GRAM_GRAMDC"/>
    <property type="match status" value="1"/>
</dbReference>
<dbReference type="FunFam" id="2.30.29.30:FF:000008">
    <property type="entry name" value="GRAM domain containing 1B"/>
    <property type="match status" value="1"/>
</dbReference>
<dbReference type="Gene3D" id="2.30.29.30">
    <property type="entry name" value="Pleckstrin-homology domain (PH domain)/Phosphotyrosine-binding domain (PTB)"/>
    <property type="match status" value="1"/>
</dbReference>
<dbReference type="InterPro" id="IPR051482">
    <property type="entry name" value="Cholesterol_transport"/>
</dbReference>
<dbReference type="InterPro" id="IPR004182">
    <property type="entry name" value="GRAM"/>
</dbReference>
<dbReference type="InterPro" id="IPR011993">
    <property type="entry name" value="PH-like_dom_sf"/>
</dbReference>
<dbReference type="InterPro" id="IPR031968">
    <property type="entry name" value="VASt"/>
</dbReference>
<dbReference type="PANTHER" id="PTHR23319">
    <property type="entry name" value="GRAM DOMAIN CONTAINING 1B, ISOFORM E"/>
    <property type="match status" value="1"/>
</dbReference>
<dbReference type="PANTHER" id="PTHR23319:SF1">
    <property type="entry name" value="PROTEIN ASTER-C"/>
    <property type="match status" value="1"/>
</dbReference>
<dbReference type="Pfam" id="PF02893">
    <property type="entry name" value="GRAM"/>
    <property type="match status" value="1"/>
</dbReference>
<dbReference type="Pfam" id="PF16016">
    <property type="entry name" value="VASt"/>
    <property type="match status" value="1"/>
</dbReference>
<dbReference type="SMART" id="SM00568">
    <property type="entry name" value="GRAM"/>
    <property type="match status" value="1"/>
</dbReference>
<dbReference type="PROSITE" id="PS51778">
    <property type="entry name" value="VAST"/>
    <property type="match status" value="1"/>
</dbReference>
<comment type="function">
    <text evidence="4">Cholesterol transporter that mediates non-vesicular transport of cholesterol from the plasma membrane (PM) to the endoplasmic reticulum (ER) (PubMed:30220461). Contains unique domains for binding cholesterol and the PM, thereby serving as a molecular bridge for the transfer of cholesterol from the PM to the ER (PubMed:30220461). Plays a crucial role in cholesterol homeostasis and has the unique ability to localize to the PM based on the level of membrane cholesterol (PubMed:30220461). In lipid-poor conditions localizes to the ER membrane and in response to excess cholesterol in the PM is recruited to the endoplasmic reticulum-plasma membrane contact sites (EPCS) which is mediated by the GRAM domain (PubMed:30220461). At the EPCS, the sterol-binding VASt/ASTER domain binds to the cholesterol in the PM and facilitates its transfer from the PM to ER (PubMed:30220461).</text>
</comment>
<comment type="subcellular location">
    <subcellularLocation>
        <location evidence="4">Endoplasmic reticulum membrane</location>
        <topology evidence="1">Single-pass membrane protein</topology>
    </subcellularLocation>
    <subcellularLocation>
        <location evidence="4">Cell membrane</location>
        <topology evidence="1">Single-pass membrane protein</topology>
    </subcellularLocation>
    <text evidence="4">In lipid-poor conditions localizes to the ER membrane and in response to excess cholesterol in the PM is recruited to the endoplasmic reticulum-plasma membrane contact sites (EPCS).</text>
</comment>
<comment type="tissue specificity">
    <text evidence="4">Highly expressed in the liver. Also found in the testis.</text>
</comment>
<comment type="domain">
    <text evidence="4">GRAM domain binds phosphatidylserine in the PM and mediates protein recruitment to endoplasmic reticulum-plasma membrane contact sites (EPCS) in response to excess cholesterol in the PM.</text>
</comment>
<comment type="domain">
    <text evidence="4">VASt (VAD1 Analog of StAR-related lipid transfer) domain, also known as ASTER (Greek for star) domain is a sterol-binding domain.</text>
</comment>
<comment type="sequence caution" evidence="6">
    <conflict type="erroneous initiation">
        <sequence resource="EMBL-CDS" id="AAH37472"/>
    </conflict>
    <text>Truncated N-terminus.</text>
</comment>
<comment type="sequence caution" evidence="6">
    <conflict type="erroneous initiation">
        <sequence resource="EMBL-CDS" id="BAC26506"/>
    </conflict>
    <text>Truncated N-terminus.</text>
</comment>